<sequence>MVKMLVLYYSAYGHMEQMAKAAAEGAREGGAEITLKRVPELVPEEVAKASHYKIDQEAPIATPGELADYDAIIIGTATRYGMMASQMKNFLDQTGGLWAKGALINKVGSVMVSTATQYGGAELALISTQWQMQHHGMIIVPLSYAYREQMGNDVVRGGAPYGMTTTADGDGSRQPSAQELDGARFQGRRVAEITAKLHG</sequence>
<reference key="1">
    <citation type="submission" date="2007-12" db="EMBL/GenBank/DDBJ databases">
        <title>Brucella suis ATCC 23445 whole genome shotgun sequencing project.</title>
        <authorList>
            <person name="Setubal J.C."/>
            <person name="Bowns C."/>
            <person name="Boyle S."/>
            <person name="Crasta O.R."/>
            <person name="Czar M.J."/>
            <person name="Dharmanolla C."/>
            <person name="Gillespie J.J."/>
            <person name="Kenyon R.W."/>
            <person name="Lu J."/>
            <person name="Mane S."/>
            <person name="Mohapatra S."/>
            <person name="Nagrani S."/>
            <person name="Purkayastha A."/>
            <person name="Rajasimha H.K."/>
            <person name="Shallom J.M."/>
            <person name="Shallom S."/>
            <person name="Shukla M."/>
            <person name="Snyder E.E."/>
            <person name="Sobral B.W."/>
            <person name="Wattam A.R."/>
            <person name="Will R."/>
            <person name="Williams K."/>
            <person name="Yoo H."/>
            <person name="Bruce D."/>
            <person name="Detter C."/>
            <person name="Munk C."/>
            <person name="Brettin T.S."/>
        </authorList>
    </citation>
    <scope>NUCLEOTIDE SEQUENCE [LARGE SCALE GENOMIC DNA]</scope>
    <source>
        <strain>ATCC 23445 / NCTC 10510</strain>
    </source>
</reference>
<gene>
    <name type="ordered locus">BSUIS_A1092</name>
</gene>
<dbReference type="EC" id="1.6.5.2" evidence="1"/>
<dbReference type="EMBL" id="CP000911">
    <property type="protein sequence ID" value="ABY38150.1"/>
    <property type="molecule type" value="Genomic_DNA"/>
</dbReference>
<dbReference type="SMR" id="B0CGJ9"/>
<dbReference type="CAZy" id="AA6">
    <property type="family name" value="Auxiliary Activities 6"/>
</dbReference>
<dbReference type="KEGG" id="bmt:BSUIS_A1092"/>
<dbReference type="HOGENOM" id="CLU_051402_0_2_5"/>
<dbReference type="Proteomes" id="UP000008545">
    <property type="component" value="Chromosome I"/>
</dbReference>
<dbReference type="GO" id="GO:0016020">
    <property type="term" value="C:membrane"/>
    <property type="evidence" value="ECO:0007669"/>
    <property type="project" value="TreeGrafter"/>
</dbReference>
<dbReference type="GO" id="GO:0050660">
    <property type="term" value="F:flavin adenine dinucleotide binding"/>
    <property type="evidence" value="ECO:0007669"/>
    <property type="project" value="UniProtKB-UniRule"/>
</dbReference>
<dbReference type="GO" id="GO:0010181">
    <property type="term" value="F:FMN binding"/>
    <property type="evidence" value="ECO:0007669"/>
    <property type="project" value="InterPro"/>
</dbReference>
<dbReference type="GO" id="GO:0051287">
    <property type="term" value="F:NAD binding"/>
    <property type="evidence" value="ECO:0007669"/>
    <property type="project" value="UniProtKB-UniRule"/>
</dbReference>
<dbReference type="GO" id="GO:0050136">
    <property type="term" value="F:NADH:ubiquinone reductase (non-electrogenic) activity"/>
    <property type="evidence" value="ECO:0007669"/>
    <property type="project" value="RHEA"/>
</dbReference>
<dbReference type="GO" id="GO:0050661">
    <property type="term" value="F:NADP binding"/>
    <property type="evidence" value="ECO:0007669"/>
    <property type="project" value="UniProtKB-UniRule"/>
</dbReference>
<dbReference type="GO" id="GO:0008753">
    <property type="term" value="F:NADPH dehydrogenase (quinone) activity"/>
    <property type="evidence" value="ECO:0007669"/>
    <property type="project" value="RHEA"/>
</dbReference>
<dbReference type="FunFam" id="3.40.50.360:FF:000001">
    <property type="entry name" value="NAD(P)H dehydrogenase (Quinone) FQR1-like"/>
    <property type="match status" value="1"/>
</dbReference>
<dbReference type="Gene3D" id="3.40.50.360">
    <property type="match status" value="1"/>
</dbReference>
<dbReference type="HAMAP" id="MF_01017">
    <property type="entry name" value="NQOR"/>
    <property type="match status" value="1"/>
</dbReference>
<dbReference type="InterPro" id="IPR008254">
    <property type="entry name" value="Flavodoxin/NO_synth"/>
</dbReference>
<dbReference type="InterPro" id="IPR029039">
    <property type="entry name" value="Flavoprotein-like_sf"/>
</dbReference>
<dbReference type="InterPro" id="IPR010089">
    <property type="entry name" value="Flavoprotein_WrbA-like"/>
</dbReference>
<dbReference type="InterPro" id="IPR005025">
    <property type="entry name" value="FMN_Rdtase-like_dom"/>
</dbReference>
<dbReference type="InterPro" id="IPR037513">
    <property type="entry name" value="NQO"/>
</dbReference>
<dbReference type="NCBIfam" id="TIGR01755">
    <property type="entry name" value="flav_wrbA"/>
    <property type="match status" value="1"/>
</dbReference>
<dbReference type="NCBIfam" id="NF002999">
    <property type="entry name" value="PRK03767.1"/>
    <property type="match status" value="1"/>
</dbReference>
<dbReference type="PANTHER" id="PTHR30546">
    <property type="entry name" value="FLAVODOXIN-RELATED PROTEIN WRBA-RELATED"/>
    <property type="match status" value="1"/>
</dbReference>
<dbReference type="PANTHER" id="PTHR30546:SF23">
    <property type="entry name" value="FLAVOPROTEIN-LIKE PROTEIN YCP4-RELATED"/>
    <property type="match status" value="1"/>
</dbReference>
<dbReference type="Pfam" id="PF03358">
    <property type="entry name" value="FMN_red"/>
    <property type="match status" value="1"/>
</dbReference>
<dbReference type="SUPFAM" id="SSF52218">
    <property type="entry name" value="Flavoproteins"/>
    <property type="match status" value="1"/>
</dbReference>
<dbReference type="PROSITE" id="PS50902">
    <property type="entry name" value="FLAVODOXIN_LIKE"/>
    <property type="match status" value="1"/>
</dbReference>
<accession>B0CGJ9</accession>
<feature type="chain" id="PRO_1000084132" description="NAD(P)H dehydrogenase (quinone)">
    <location>
        <begin position="1"/>
        <end position="199"/>
    </location>
</feature>
<feature type="domain" description="Flavodoxin-like" evidence="1">
    <location>
        <begin position="4"/>
        <end position="190"/>
    </location>
</feature>
<feature type="region of interest" description="Disordered" evidence="2">
    <location>
        <begin position="162"/>
        <end position="181"/>
    </location>
</feature>
<feature type="compositionally biased region" description="Polar residues" evidence="2">
    <location>
        <begin position="163"/>
        <end position="177"/>
    </location>
</feature>
<feature type="binding site" evidence="1">
    <location>
        <begin position="10"/>
        <end position="15"/>
    </location>
    <ligand>
        <name>FMN</name>
        <dbReference type="ChEBI" id="CHEBI:58210"/>
    </ligand>
</feature>
<feature type="binding site" evidence="1">
    <location>
        <position position="12"/>
    </location>
    <ligand>
        <name>NAD(+)</name>
        <dbReference type="ChEBI" id="CHEBI:57540"/>
    </ligand>
</feature>
<feature type="binding site" evidence="1">
    <location>
        <begin position="78"/>
        <end position="80"/>
    </location>
    <ligand>
        <name>FMN</name>
        <dbReference type="ChEBI" id="CHEBI:58210"/>
    </ligand>
</feature>
<feature type="binding site" evidence="1">
    <location>
        <position position="98"/>
    </location>
    <ligand>
        <name>substrate</name>
    </ligand>
</feature>
<feature type="binding site" evidence="1">
    <location>
        <begin position="113"/>
        <end position="119"/>
    </location>
    <ligand>
        <name>FMN</name>
        <dbReference type="ChEBI" id="CHEBI:58210"/>
    </ligand>
</feature>
<feature type="binding site" evidence="1">
    <location>
        <position position="134"/>
    </location>
    <ligand>
        <name>FMN</name>
        <dbReference type="ChEBI" id="CHEBI:58210"/>
    </ligand>
</feature>
<protein>
    <recommendedName>
        <fullName evidence="1">NAD(P)H dehydrogenase (quinone)</fullName>
        <ecNumber evidence="1">1.6.5.2</ecNumber>
    </recommendedName>
    <alternativeName>
        <fullName>Flavoprotein WrbA</fullName>
    </alternativeName>
    <alternativeName>
        <fullName evidence="1">NAD(P)H:quinone oxidoreductase</fullName>
        <shortName evidence="1">NQO</shortName>
    </alternativeName>
</protein>
<comment type="catalytic activity">
    <reaction evidence="1">
        <text>a quinone + NADH + H(+) = a quinol + NAD(+)</text>
        <dbReference type="Rhea" id="RHEA:46160"/>
        <dbReference type="ChEBI" id="CHEBI:15378"/>
        <dbReference type="ChEBI" id="CHEBI:24646"/>
        <dbReference type="ChEBI" id="CHEBI:57540"/>
        <dbReference type="ChEBI" id="CHEBI:57945"/>
        <dbReference type="ChEBI" id="CHEBI:132124"/>
        <dbReference type="EC" id="1.6.5.2"/>
    </reaction>
</comment>
<comment type="catalytic activity">
    <reaction evidence="1">
        <text>a quinone + NADPH + H(+) = a quinol + NADP(+)</text>
        <dbReference type="Rhea" id="RHEA:46164"/>
        <dbReference type="ChEBI" id="CHEBI:15378"/>
        <dbReference type="ChEBI" id="CHEBI:24646"/>
        <dbReference type="ChEBI" id="CHEBI:57783"/>
        <dbReference type="ChEBI" id="CHEBI:58349"/>
        <dbReference type="ChEBI" id="CHEBI:132124"/>
        <dbReference type="EC" id="1.6.5.2"/>
    </reaction>
</comment>
<comment type="cofactor">
    <cofactor evidence="1">
        <name>FMN</name>
        <dbReference type="ChEBI" id="CHEBI:58210"/>
    </cofactor>
    <text evidence="1">Binds 1 FMN per monomer.</text>
</comment>
<comment type="similarity">
    <text evidence="1">Belongs to the WrbA family.</text>
</comment>
<keyword id="KW-0285">Flavoprotein</keyword>
<keyword id="KW-0288">FMN</keyword>
<keyword id="KW-0520">NAD</keyword>
<keyword id="KW-0521">NADP</keyword>
<keyword id="KW-0547">Nucleotide-binding</keyword>
<keyword id="KW-0560">Oxidoreductase</keyword>
<organism>
    <name type="scientific">Brucella suis (strain ATCC 23445 / NCTC 10510)</name>
    <dbReference type="NCBI Taxonomy" id="470137"/>
    <lineage>
        <taxon>Bacteria</taxon>
        <taxon>Pseudomonadati</taxon>
        <taxon>Pseudomonadota</taxon>
        <taxon>Alphaproteobacteria</taxon>
        <taxon>Hyphomicrobiales</taxon>
        <taxon>Brucellaceae</taxon>
        <taxon>Brucella/Ochrobactrum group</taxon>
        <taxon>Brucella</taxon>
    </lineage>
</organism>
<name>NQOR_BRUSI</name>
<evidence type="ECO:0000255" key="1">
    <source>
        <dbReference type="HAMAP-Rule" id="MF_01017"/>
    </source>
</evidence>
<evidence type="ECO:0000256" key="2">
    <source>
        <dbReference type="SAM" id="MobiDB-lite"/>
    </source>
</evidence>
<proteinExistence type="inferred from homology"/>